<sequence>MNILFAVSECVPFVKSGGLADVAGALPKELKKLGVEVRIILPNYSLIPQKLRDGCTLHKVINVPLGWRNQYCGILKGEQDGITYYLIDNEYYFKRDSLYGHYDDGERFSYFSKAVLECIPHLDFEVDVLHSHDWHTAMVNFLLREKYQDNPLYEHIKTVYTIHNLQFQGVFPPEVMYDLLELGDEYFHSEQLEFYGNVNFMKGGIIASDQITAVSPTYKEEIQYEFFGEKLDGLLRKYNDKLSGIVNGIDTSVYNPETDSYITAQYDADSLYEKNENKRALQRYFGLPEKEDTPIISMVTRLTKQKGLDLVRTVFREIMEEDVQCIILGSGDSEYEQFFEWMAYEYPEKVKVYIGFNEELAHQVYAGSDLFLMPSLFEPCGLGQLIALAYGTIPIVRETGGLNDTVQSYDEETGEGNGFSFTNFNAHDMLHTVRRAIEFYHDKPVWEQLVKQAMTEDYSWEKSALAYKKLYKSLME</sequence>
<feature type="chain" id="PRO_1000135645" description="Glycogen synthase">
    <location>
        <begin position="1"/>
        <end position="476"/>
    </location>
</feature>
<feature type="binding site" evidence="1">
    <location>
        <position position="15"/>
    </location>
    <ligand>
        <name>ADP-alpha-D-glucose</name>
        <dbReference type="ChEBI" id="CHEBI:57498"/>
    </ligand>
</feature>
<dbReference type="EC" id="2.4.1.21" evidence="1"/>
<dbReference type="EMBL" id="CP000227">
    <property type="protein sequence ID" value="ACM15108.1"/>
    <property type="molecule type" value="Genomic_DNA"/>
</dbReference>
<dbReference type="SMR" id="B9J2G5"/>
<dbReference type="CAZy" id="GT5">
    <property type="family name" value="Glycosyltransferase Family 5"/>
</dbReference>
<dbReference type="KEGG" id="bcq:BCQ_4682"/>
<dbReference type="HOGENOM" id="CLU_009583_18_2_9"/>
<dbReference type="UniPathway" id="UPA00164"/>
<dbReference type="Proteomes" id="UP000000441">
    <property type="component" value="Chromosome"/>
</dbReference>
<dbReference type="GO" id="GO:0009011">
    <property type="term" value="F:alpha-1,4-glucan glucosyltransferase (ADP-glucose donor) activity"/>
    <property type="evidence" value="ECO:0007669"/>
    <property type="project" value="UniProtKB-UniRule"/>
</dbReference>
<dbReference type="GO" id="GO:0004373">
    <property type="term" value="F:alpha-1,4-glucan glucosyltransferase (UDP-glucose donor) activity"/>
    <property type="evidence" value="ECO:0007669"/>
    <property type="project" value="InterPro"/>
</dbReference>
<dbReference type="GO" id="GO:0005978">
    <property type="term" value="P:glycogen biosynthetic process"/>
    <property type="evidence" value="ECO:0007669"/>
    <property type="project" value="UniProtKB-UniRule"/>
</dbReference>
<dbReference type="CDD" id="cd03791">
    <property type="entry name" value="GT5_Glycogen_synthase_DULL1-like"/>
    <property type="match status" value="1"/>
</dbReference>
<dbReference type="FunFam" id="3.40.50.2000:FF:000175">
    <property type="entry name" value="Glycogen synthase"/>
    <property type="match status" value="1"/>
</dbReference>
<dbReference type="Gene3D" id="3.40.50.2000">
    <property type="entry name" value="Glycogen Phosphorylase B"/>
    <property type="match status" value="2"/>
</dbReference>
<dbReference type="HAMAP" id="MF_00484">
    <property type="entry name" value="Glycogen_synth"/>
    <property type="match status" value="1"/>
</dbReference>
<dbReference type="InterPro" id="IPR001296">
    <property type="entry name" value="Glyco_trans_1"/>
</dbReference>
<dbReference type="InterPro" id="IPR011835">
    <property type="entry name" value="GS/SS"/>
</dbReference>
<dbReference type="InterPro" id="IPR013534">
    <property type="entry name" value="Starch_synth_cat_dom"/>
</dbReference>
<dbReference type="NCBIfam" id="TIGR02095">
    <property type="entry name" value="glgA"/>
    <property type="match status" value="1"/>
</dbReference>
<dbReference type="NCBIfam" id="NF001898">
    <property type="entry name" value="PRK00654.1-1"/>
    <property type="match status" value="1"/>
</dbReference>
<dbReference type="NCBIfam" id="NF001899">
    <property type="entry name" value="PRK00654.1-2"/>
    <property type="match status" value="1"/>
</dbReference>
<dbReference type="PANTHER" id="PTHR45825:SF11">
    <property type="entry name" value="ALPHA AMYLASE DOMAIN-CONTAINING PROTEIN"/>
    <property type="match status" value="1"/>
</dbReference>
<dbReference type="PANTHER" id="PTHR45825">
    <property type="entry name" value="GRANULE-BOUND STARCH SYNTHASE 1, CHLOROPLASTIC/AMYLOPLASTIC"/>
    <property type="match status" value="1"/>
</dbReference>
<dbReference type="Pfam" id="PF08323">
    <property type="entry name" value="Glyco_transf_5"/>
    <property type="match status" value="1"/>
</dbReference>
<dbReference type="Pfam" id="PF00534">
    <property type="entry name" value="Glycos_transf_1"/>
    <property type="match status" value="1"/>
</dbReference>
<dbReference type="SUPFAM" id="SSF53756">
    <property type="entry name" value="UDP-Glycosyltransferase/glycogen phosphorylase"/>
    <property type="match status" value="1"/>
</dbReference>
<protein>
    <recommendedName>
        <fullName evidence="1">Glycogen synthase</fullName>
        <ecNumber evidence="1">2.4.1.21</ecNumber>
    </recommendedName>
    <alternativeName>
        <fullName evidence="1">Starch [bacterial glycogen] synthase</fullName>
    </alternativeName>
</protein>
<proteinExistence type="inferred from homology"/>
<comment type="function">
    <text evidence="1">Synthesizes alpha-1,4-glucan chains using ADP-glucose.</text>
</comment>
<comment type="catalytic activity">
    <reaction evidence="1">
        <text>[(1-&gt;4)-alpha-D-glucosyl](n) + ADP-alpha-D-glucose = [(1-&gt;4)-alpha-D-glucosyl](n+1) + ADP + H(+)</text>
        <dbReference type="Rhea" id="RHEA:18189"/>
        <dbReference type="Rhea" id="RHEA-COMP:9584"/>
        <dbReference type="Rhea" id="RHEA-COMP:9587"/>
        <dbReference type="ChEBI" id="CHEBI:15378"/>
        <dbReference type="ChEBI" id="CHEBI:15444"/>
        <dbReference type="ChEBI" id="CHEBI:57498"/>
        <dbReference type="ChEBI" id="CHEBI:456216"/>
        <dbReference type="EC" id="2.4.1.21"/>
    </reaction>
</comment>
<comment type="pathway">
    <text evidence="1">Glycan biosynthesis; glycogen biosynthesis.</text>
</comment>
<comment type="similarity">
    <text evidence="1">Belongs to the glycosyltransferase 1 family. Bacterial/plant glycogen synthase subfamily.</text>
</comment>
<accession>B9J2G5</accession>
<keyword id="KW-0320">Glycogen biosynthesis</keyword>
<keyword id="KW-0328">Glycosyltransferase</keyword>
<keyword id="KW-0808">Transferase</keyword>
<name>GLGA_BACCQ</name>
<gene>
    <name evidence="1" type="primary">glgA</name>
    <name type="ordered locus">BCQ_4682</name>
</gene>
<evidence type="ECO:0000255" key="1">
    <source>
        <dbReference type="HAMAP-Rule" id="MF_00484"/>
    </source>
</evidence>
<reference key="1">
    <citation type="journal article" date="2009" name="J. Bacteriol.">
        <title>Complete genome sequence of the extremophilic Bacillus cereus strain Q1 with industrial applications.</title>
        <authorList>
            <person name="Xiong Z."/>
            <person name="Jiang Y."/>
            <person name="Qi D."/>
            <person name="Lu H."/>
            <person name="Yang F."/>
            <person name="Yang J."/>
            <person name="Chen L."/>
            <person name="Sun L."/>
            <person name="Xu X."/>
            <person name="Xue Y."/>
            <person name="Zhu Y."/>
            <person name="Jin Q."/>
        </authorList>
    </citation>
    <scope>NUCLEOTIDE SEQUENCE [LARGE SCALE GENOMIC DNA]</scope>
    <source>
        <strain>Q1</strain>
    </source>
</reference>
<organism>
    <name type="scientific">Bacillus cereus (strain Q1)</name>
    <dbReference type="NCBI Taxonomy" id="361100"/>
    <lineage>
        <taxon>Bacteria</taxon>
        <taxon>Bacillati</taxon>
        <taxon>Bacillota</taxon>
        <taxon>Bacilli</taxon>
        <taxon>Bacillales</taxon>
        <taxon>Bacillaceae</taxon>
        <taxon>Bacillus</taxon>
        <taxon>Bacillus cereus group</taxon>
    </lineage>
</organism>